<evidence type="ECO:0000255" key="1">
    <source>
        <dbReference type="HAMAP-Rule" id="MF_01684"/>
    </source>
</evidence>
<sequence>MKIGIIGAMEEEVTLLRDKIENRQTISLGGCEIYTGQLNGTEVALLKSGIGKVAAALGATLLLEHCKPDVIINTGSAGGLAPTLKVGDIVVSDEARYHDADVTAFGYEYGQLPGCPAGFKADDKLIAAAEACIAELNLNAVRGLIVSGDAFINGSVGLAKIRHNFPQAIAVEMEATAIAHVCHNFNVPFVVVRAISDVADQQSHLSFDEFLAVAAKQSSLMVESLVQKLAHG</sequence>
<reference key="1">
    <citation type="journal article" date="2009" name="PLoS Genet.">
        <title>Organised genome dynamics in the Escherichia coli species results in highly diverse adaptive paths.</title>
        <authorList>
            <person name="Touchon M."/>
            <person name="Hoede C."/>
            <person name="Tenaillon O."/>
            <person name="Barbe V."/>
            <person name="Baeriswyl S."/>
            <person name="Bidet P."/>
            <person name="Bingen E."/>
            <person name="Bonacorsi S."/>
            <person name="Bouchier C."/>
            <person name="Bouvet O."/>
            <person name="Calteau A."/>
            <person name="Chiapello H."/>
            <person name="Clermont O."/>
            <person name="Cruveiller S."/>
            <person name="Danchin A."/>
            <person name="Diard M."/>
            <person name="Dossat C."/>
            <person name="Karoui M.E."/>
            <person name="Frapy E."/>
            <person name="Garry L."/>
            <person name="Ghigo J.M."/>
            <person name="Gilles A.M."/>
            <person name="Johnson J."/>
            <person name="Le Bouguenec C."/>
            <person name="Lescat M."/>
            <person name="Mangenot S."/>
            <person name="Martinez-Jehanne V."/>
            <person name="Matic I."/>
            <person name="Nassif X."/>
            <person name="Oztas S."/>
            <person name="Petit M.A."/>
            <person name="Pichon C."/>
            <person name="Rouy Z."/>
            <person name="Ruf C.S."/>
            <person name="Schneider D."/>
            <person name="Tourret J."/>
            <person name="Vacherie B."/>
            <person name="Vallenet D."/>
            <person name="Medigue C."/>
            <person name="Rocha E.P.C."/>
            <person name="Denamur E."/>
        </authorList>
    </citation>
    <scope>NUCLEOTIDE SEQUENCE [LARGE SCALE GENOMIC DNA]</scope>
    <source>
        <strain>IAI39 / ExPEC</strain>
    </source>
</reference>
<feature type="chain" id="PRO_1000187420" description="5'-methylthioadenosine/S-adenosylhomocysteine nucleosidase">
    <location>
        <begin position="1"/>
        <end position="232"/>
    </location>
</feature>
<feature type="active site" description="Proton acceptor" evidence="1">
    <location>
        <position position="12"/>
    </location>
</feature>
<feature type="active site" description="Proton donor" evidence="1">
    <location>
        <position position="197"/>
    </location>
</feature>
<feature type="binding site" evidence="1">
    <location>
        <position position="78"/>
    </location>
    <ligand>
        <name>substrate</name>
    </ligand>
</feature>
<feature type="binding site" evidence="1">
    <location>
        <position position="152"/>
    </location>
    <ligand>
        <name>substrate</name>
    </ligand>
</feature>
<feature type="binding site" evidence="1">
    <location>
        <begin position="173"/>
        <end position="174"/>
    </location>
    <ligand>
        <name>substrate</name>
    </ligand>
</feature>
<organism>
    <name type="scientific">Escherichia coli O7:K1 (strain IAI39 / ExPEC)</name>
    <dbReference type="NCBI Taxonomy" id="585057"/>
    <lineage>
        <taxon>Bacteria</taxon>
        <taxon>Pseudomonadati</taxon>
        <taxon>Pseudomonadota</taxon>
        <taxon>Gammaproteobacteria</taxon>
        <taxon>Enterobacterales</taxon>
        <taxon>Enterobacteriaceae</taxon>
        <taxon>Escherichia</taxon>
    </lineage>
</organism>
<protein>
    <recommendedName>
        <fullName evidence="1">5'-methylthioadenosine/S-adenosylhomocysteine nucleosidase</fullName>
        <shortName evidence="1">MTA/SAH nucleosidase</shortName>
        <shortName evidence="1">MTAN</shortName>
        <ecNumber evidence="1">3.2.2.9</ecNumber>
    </recommendedName>
    <alternativeName>
        <fullName evidence="1">5'-deoxyadenosine nucleosidase</fullName>
        <shortName evidence="1">DOA nucleosidase</shortName>
        <shortName evidence="1">dAdo nucleosidase</shortName>
    </alternativeName>
    <alternativeName>
        <fullName evidence="1">5'-methylthioadenosine nucleosidase</fullName>
        <shortName evidence="1">MTA nucleosidase</shortName>
    </alternativeName>
    <alternativeName>
        <fullName evidence="1">S-adenosylhomocysteine nucleosidase</fullName>
        <shortName evidence="1">AdoHcy nucleosidase</shortName>
        <shortName evidence="1">SAH nucleosidase</shortName>
        <shortName evidence="1">SRH nucleosidase</shortName>
    </alternativeName>
</protein>
<comment type="function">
    <text evidence="1">Catalyzes the irreversible cleavage of the glycosidic bond in both 5'-methylthioadenosine (MTA) and S-adenosylhomocysteine (SAH/AdoHcy) to adenine and the corresponding thioribose, 5'-methylthioribose and S-ribosylhomocysteine, respectively. Also cleaves 5'-deoxyadenosine, a toxic by-product of radical S-adenosylmethionine (SAM) enzymes, into 5-deoxyribose and adenine. Thus, is required for in vivo function of the radical SAM enzymes biotin synthase and lipoic acid synthase, that are inhibited by 5'-deoxyadenosine accumulation.</text>
</comment>
<comment type="catalytic activity">
    <reaction evidence="1">
        <text>S-adenosyl-L-homocysteine + H2O = S-(5-deoxy-D-ribos-5-yl)-L-homocysteine + adenine</text>
        <dbReference type="Rhea" id="RHEA:17805"/>
        <dbReference type="ChEBI" id="CHEBI:15377"/>
        <dbReference type="ChEBI" id="CHEBI:16708"/>
        <dbReference type="ChEBI" id="CHEBI:57856"/>
        <dbReference type="ChEBI" id="CHEBI:58195"/>
        <dbReference type="EC" id="3.2.2.9"/>
    </reaction>
</comment>
<comment type="catalytic activity">
    <reaction evidence="1">
        <text>S-methyl-5'-thioadenosine + H2O = 5-(methylsulfanyl)-D-ribose + adenine</text>
        <dbReference type="Rhea" id="RHEA:13617"/>
        <dbReference type="ChEBI" id="CHEBI:15377"/>
        <dbReference type="ChEBI" id="CHEBI:16708"/>
        <dbReference type="ChEBI" id="CHEBI:17509"/>
        <dbReference type="ChEBI" id="CHEBI:78440"/>
        <dbReference type="EC" id="3.2.2.9"/>
    </reaction>
</comment>
<comment type="catalytic activity">
    <reaction evidence="1">
        <text>5'-deoxyadenosine + H2O = 5-deoxy-D-ribose + adenine</text>
        <dbReference type="Rhea" id="RHEA:29859"/>
        <dbReference type="ChEBI" id="CHEBI:15377"/>
        <dbReference type="ChEBI" id="CHEBI:16708"/>
        <dbReference type="ChEBI" id="CHEBI:17319"/>
        <dbReference type="ChEBI" id="CHEBI:149540"/>
        <dbReference type="EC" id="3.2.2.9"/>
    </reaction>
    <physiologicalReaction direction="left-to-right" evidence="1">
        <dbReference type="Rhea" id="RHEA:29860"/>
    </physiologicalReaction>
</comment>
<comment type="pathway">
    <text evidence="1">Amino-acid biosynthesis; L-methionine biosynthesis via salvage pathway; S-methyl-5-thio-alpha-D-ribose 1-phosphate from S-methyl-5'-thioadenosine (hydrolase route): step 1/2.</text>
</comment>
<comment type="subunit">
    <text evidence="1">Homodimer.</text>
</comment>
<comment type="similarity">
    <text evidence="1">Belongs to the PNP/UDP phosphorylase family. MtnN subfamily.</text>
</comment>
<name>MTNN_ECO7I</name>
<proteinExistence type="inferred from homology"/>
<keyword id="KW-0028">Amino-acid biosynthesis</keyword>
<keyword id="KW-0378">Hydrolase</keyword>
<keyword id="KW-0486">Methionine biosynthesis</keyword>
<accession>B7NIC2</accession>
<dbReference type="EC" id="3.2.2.9" evidence="1"/>
<dbReference type="EMBL" id="CU928164">
    <property type="protein sequence ID" value="CAR16303.1"/>
    <property type="molecule type" value="Genomic_DNA"/>
</dbReference>
<dbReference type="RefSeq" id="WP_000689844.1">
    <property type="nucleotide sequence ID" value="NC_011750.1"/>
</dbReference>
<dbReference type="RefSeq" id="YP_002406209.1">
    <property type="nucleotide sequence ID" value="NC_011750.1"/>
</dbReference>
<dbReference type="SMR" id="B7NIC2"/>
<dbReference type="STRING" id="585057.ECIAI39_0163"/>
<dbReference type="GeneID" id="93777267"/>
<dbReference type="KEGG" id="ect:ECIAI39_0163"/>
<dbReference type="PATRIC" id="fig|585057.6.peg.176"/>
<dbReference type="HOGENOM" id="CLU_031248_2_2_6"/>
<dbReference type="UniPathway" id="UPA00904">
    <property type="reaction ID" value="UER00871"/>
</dbReference>
<dbReference type="Proteomes" id="UP000000749">
    <property type="component" value="Chromosome"/>
</dbReference>
<dbReference type="GO" id="GO:0005829">
    <property type="term" value="C:cytosol"/>
    <property type="evidence" value="ECO:0007669"/>
    <property type="project" value="TreeGrafter"/>
</dbReference>
<dbReference type="GO" id="GO:0008782">
    <property type="term" value="F:adenosylhomocysteine nucleosidase activity"/>
    <property type="evidence" value="ECO:0007669"/>
    <property type="project" value="UniProtKB-UniRule"/>
</dbReference>
<dbReference type="GO" id="GO:0008930">
    <property type="term" value="F:methylthioadenosine nucleosidase activity"/>
    <property type="evidence" value="ECO:0007669"/>
    <property type="project" value="UniProtKB-UniRule"/>
</dbReference>
<dbReference type="GO" id="GO:0019509">
    <property type="term" value="P:L-methionine salvage from methylthioadenosine"/>
    <property type="evidence" value="ECO:0007669"/>
    <property type="project" value="UniProtKB-UniRule"/>
</dbReference>
<dbReference type="GO" id="GO:0019284">
    <property type="term" value="P:L-methionine salvage from S-adenosylmethionine"/>
    <property type="evidence" value="ECO:0007669"/>
    <property type="project" value="TreeGrafter"/>
</dbReference>
<dbReference type="GO" id="GO:0046124">
    <property type="term" value="P:purine deoxyribonucleoside catabolic process"/>
    <property type="evidence" value="ECO:0007669"/>
    <property type="project" value="UniProtKB-UniRule"/>
</dbReference>
<dbReference type="CDD" id="cd09008">
    <property type="entry name" value="MTAN"/>
    <property type="match status" value="1"/>
</dbReference>
<dbReference type="FunFam" id="3.40.50.1580:FF:000001">
    <property type="entry name" value="MTA/SAH nucleosidase family protein"/>
    <property type="match status" value="1"/>
</dbReference>
<dbReference type="Gene3D" id="3.40.50.1580">
    <property type="entry name" value="Nucleoside phosphorylase domain"/>
    <property type="match status" value="1"/>
</dbReference>
<dbReference type="HAMAP" id="MF_01684">
    <property type="entry name" value="Salvage_MtnN"/>
    <property type="match status" value="1"/>
</dbReference>
<dbReference type="InterPro" id="IPR010049">
    <property type="entry name" value="MTA_SAH_Nsdase"/>
</dbReference>
<dbReference type="InterPro" id="IPR000845">
    <property type="entry name" value="Nucleoside_phosphorylase_d"/>
</dbReference>
<dbReference type="InterPro" id="IPR035994">
    <property type="entry name" value="Nucleoside_phosphorylase_sf"/>
</dbReference>
<dbReference type="NCBIfam" id="TIGR01704">
    <property type="entry name" value="MTA_SAH-Nsdase"/>
    <property type="match status" value="1"/>
</dbReference>
<dbReference type="NCBIfam" id="NF004079">
    <property type="entry name" value="PRK05584.1"/>
    <property type="match status" value="1"/>
</dbReference>
<dbReference type="PANTHER" id="PTHR46832">
    <property type="entry name" value="5'-METHYLTHIOADENOSINE/S-ADENOSYLHOMOCYSTEINE NUCLEOSIDASE"/>
    <property type="match status" value="1"/>
</dbReference>
<dbReference type="PANTHER" id="PTHR46832:SF1">
    <property type="entry name" value="5'-METHYLTHIOADENOSINE_S-ADENOSYLHOMOCYSTEINE NUCLEOSIDASE"/>
    <property type="match status" value="1"/>
</dbReference>
<dbReference type="Pfam" id="PF01048">
    <property type="entry name" value="PNP_UDP_1"/>
    <property type="match status" value="1"/>
</dbReference>
<dbReference type="SUPFAM" id="SSF53167">
    <property type="entry name" value="Purine and uridine phosphorylases"/>
    <property type="match status" value="1"/>
</dbReference>
<gene>
    <name evidence="1" type="primary">mtnN</name>
    <name type="ordered locus">ECIAI39_0163</name>
</gene>